<protein>
    <recommendedName>
        <fullName evidence="1">Ribosomal protein bS6--L-glutamate ligase</fullName>
        <ecNumber evidence="1">6.3.2.-</ecNumber>
    </recommendedName>
    <alternativeName>
        <fullName evidence="1">Poly-alpha-glutamate synthase</fullName>
    </alternativeName>
    <alternativeName>
        <fullName evidence="1">Ribosomal protein bS6 modification protein</fullName>
    </alternativeName>
</protein>
<organism>
    <name type="scientific">Salmonella dublin (strain CT_02021853)</name>
    <dbReference type="NCBI Taxonomy" id="439851"/>
    <lineage>
        <taxon>Bacteria</taxon>
        <taxon>Pseudomonadati</taxon>
        <taxon>Pseudomonadota</taxon>
        <taxon>Gammaproteobacteria</taxon>
        <taxon>Enterobacterales</taxon>
        <taxon>Enterobacteriaceae</taxon>
        <taxon>Salmonella</taxon>
    </lineage>
</organism>
<dbReference type="EC" id="6.3.2.-" evidence="1"/>
<dbReference type="EMBL" id="CP001144">
    <property type="protein sequence ID" value="ACH77313.1"/>
    <property type="molecule type" value="Genomic_DNA"/>
</dbReference>
<dbReference type="RefSeq" id="WP_000684361.1">
    <property type="nucleotide sequence ID" value="NC_011205.1"/>
</dbReference>
<dbReference type="SMR" id="B5FPY9"/>
<dbReference type="KEGG" id="sed:SeD_A0980"/>
<dbReference type="HOGENOM" id="CLU_054353_0_1_6"/>
<dbReference type="Proteomes" id="UP000008322">
    <property type="component" value="Chromosome"/>
</dbReference>
<dbReference type="GO" id="GO:0005737">
    <property type="term" value="C:cytoplasm"/>
    <property type="evidence" value="ECO:0007669"/>
    <property type="project" value="TreeGrafter"/>
</dbReference>
<dbReference type="GO" id="GO:0005524">
    <property type="term" value="F:ATP binding"/>
    <property type="evidence" value="ECO:0007669"/>
    <property type="project" value="UniProtKB-UniRule"/>
</dbReference>
<dbReference type="GO" id="GO:0046872">
    <property type="term" value="F:metal ion binding"/>
    <property type="evidence" value="ECO:0007669"/>
    <property type="project" value="UniProtKB-KW"/>
</dbReference>
<dbReference type="GO" id="GO:0018169">
    <property type="term" value="F:ribosomal S6-glutamic acid ligase activity"/>
    <property type="evidence" value="ECO:0007669"/>
    <property type="project" value="UniProtKB-UniRule"/>
</dbReference>
<dbReference type="GO" id="GO:0036211">
    <property type="term" value="P:protein modification process"/>
    <property type="evidence" value="ECO:0007669"/>
    <property type="project" value="InterPro"/>
</dbReference>
<dbReference type="GO" id="GO:0009432">
    <property type="term" value="P:SOS response"/>
    <property type="evidence" value="ECO:0007669"/>
    <property type="project" value="TreeGrafter"/>
</dbReference>
<dbReference type="GO" id="GO:0006412">
    <property type="term" value="P:translation"/>
    <property type="evidence" value="ECO:0007669"/>
    <property type="project" value="UniProtKB-KW"/>
</dbReference>
<dbReference type="FunFam" id="3.40.50.20:FF:000004">
    <property type="entry name" value="Probable alpha-L-glutamate ligase"/>
    <property type="match status" value="1"/>
</dbReference>
<dbReference type="FunFam" id="3.30.1490.20:FF:000005">
    <property type="entry name" value="Probable alpha-L-glutamate ligase 1"/>
    <property type="match status" value="1"/>
</dbReference>
<dbReference type="FunFam" id="3.30.470.20:FF:000016">
    <property type="entry name" value="Ribosomal protein S6--L-glutamate ligase"/>
    <property type="match status" value="1"/>
</dbReference>
<dbReference type="Gene3D" id="3.40.50.20">
    <property type="match status" value="1"/>
</dbReference>
<dbReference type="Gene3D" id="3.30.1490.20">
    <property type="entry name" value="ATP-grasp fold, A domain"/>
    <property type="match status" value="1"/>
</dbReference>
<dbReference type="Gene3D" id="3.30.470.20">
    <property type="entry name" value="ATP-grasp fold, B domain"/>
    <property type="match status" value="1"/>
</dbReference>
<dbReference type="HAMAP" id="MF_01552">
    <property type="entry name" value="RimK"/>
    <property type="match status" value="1"/>
</dbReference>
<dbReference type="InterPro" id="IPR011761">
    <property type="entry name" value="ATP-grasp"/>
</dbReference>
<dbReference type="InterPro" id="IPR013651">
    <property type="entry name" value="ATP-grasp_RimK-type"/>
</dbReference>
<dbReference type="InterPro" id="IPR013815">
    <property type="entry name" value="ATP_grasp_subdomain_1"/>
</dbReference>
<dbReference type="InterPro" id="IPR023533">
    <property type="entry name" value="RimK"/>
</dbReference>
<dbReference type="InterPro" id="IPR041107">
    <property type="entry name" value="Rimk_N"/>
</dbReference>
<dbReference type="InterPro" id="IPR004666">
    <property type="entry name" value="Rp_bS6_RimK/Lys_biosynth_LsyX"/>
</dbReference>
<dbReference type="NCBIfam" id="NF007764">
    <property type="entry name" value="PRK10446.1"/>
    <property type="match status" value="1"/>
</dbReference>
<dbReference type="NCBIfam" id="TIGR00768">
    <property type="entry name" value="rimK_fam"/>
    <property type="match status" value="1"/>
</dbReference>
<dbReference type="PANTHER" id="PTHR21621:SF7">
    <property type="entry name" value="RIBOSOMAL PROTEIN BS6--L-GLUTAMATE LIGASE"/>
    <property type="match status" value="1"/>
</dbReference>
<dbReference type="PANTHER" id="PTHR21621">
    <property type="entry name" value="RIBOSOMAL PROTEIN S6 MODIFICATION PROTEIN"/>
    <property type="match status" value="1"/>
</dbReference>
<dbReference type="Pfam" id="PF08443">
    <property type="entry name" value="RimK"/>
    <property type="match status" value="1"/>
</dbReference>
<dbReference type="Pfam" id="PF18030">
    <property type="entry name" value="Rimk_N"/>
    <property type="match status" value="1"/>
</dbReference>
<dbReference type="SUPFAM" id="SSF56059">
    <property type="entry name" value="Glutathione synthetase ATP-binding domain-like"/>
    <property type="match status" value="1"/>
</dbReference>
<dbReference type="PROSITE" id="PS50975">
    <property type="entry name" value="ATP_GRASP"/>
    <property type="match status" value="1"/>
</dbReference>
<reference key="1">
    <citation type="journal article" date="2011" name="J. Bacteriol.">
        <title>Comparative genomics of 28 Salmonella enterica isolates: evidence for CRISPR-mediated adaptive sublineage evolution.</title>
        <authorList>
            <person name="Fricke W.F."/>
            <person name="Mammel M.K."/>
            <person name="McDermott P.F."/>
            <person name="Tartera C."/>
            <person name="White D.G."/>
            <person name="Leclerc J.E."/>
            <person name="Ravel J."/>
            <person name="Cebula T.A."/>
        </authorList>
    </citation>
    <scope>NUCLEOTIDE SEQUENCE [LARGE SCALE GENOMIC DNA]</scope>
    <source>
        <strain>CT_02021853</strain>
    </source>
</reference>
<keyword id="KW-0067">ATP-binding</keyword>
<keyword id="KW-0436">Ligase</keyword>
<keyword id="KW-0460">Magnesium</keyword>
<keyword id="KW-0464">Manganese</keyword>
<keyword id="KW-0479">Metal-binding</keyword>
<keyword id="KW-0547">Nucleotide-binding</keyword>
<keyword id="KW-0648">Protein biosynthesis</keyword>
<comment type="function">
    <text evidence="1">An L-glutamate ligase that catalyzes the ATP-dependent post-translational addition of glutamate residues to the C-terminus of ribosomal protein bS6 (RpsF). Is also able to catalyze the synthesis of poly-alpha-glutamate in vitro, via ATP hydrolysis from unprotected glutamate as substrate. The number of glutamate residues added to either RpsF or to poly-alpha-glutamate changes with pH.</text>
</comment>
<comment type="cofactor">
    <cofactor evidence="1">
        <name>Mg(2+)</name>
        <dbReference type="ChEBI" id="CHEBI:18420"/>
    </cofactor>
    <cofactor evidence="1">
        <name>Mn(2+)</name>
        <dbReference type="ChEBI" id="CHEBI:29035"/>
    </cofactor>
    <text evidence="1">Binds 2 magnesium or manganese ions per subunit.</text>
</comment>
<comment type="similarity">
    <text evidence="1">Belongs to the RimK family.</text>
</comment>
<accession>B5FPY9</accession>
<sequence length="300" mass="32294">MKIAILSRDGTLYSCKRLREAAMRRGHLVEILDPLSCYMNINPAASSIHYKGRRLPHFDAVIPRIGSAITFYGTAALRQFELLGSYPLNESVAITRARDKLRSLQLLARQGIDLPITGIAHSPDDTSDLIKMVGGAPLVVKLVEGTQGIGVVLAETRQAAESVIDAFRGLNAHILVQEYIAEAKGCDIRCLVVGNEVVAAIERCAKAGDFRSNLHRGGVASIATITPRERDIAIKAAQTLGLDVAGVDILRAARGPLVMEVNASPGLEGIEKTTGVDIAGRMIQWIERHATPEFCLKIGG</sequence>
<name>RIMK_SALDC</name>
<gene>
    <name evidence="1" type="primary">rimK</name>
    <name type="ordered locus">SeD_A0980</name>
</gene>
<evidence type="ECO:0000255" key="1">
    <source>
        <dbReference type="HAMAP-Rule" id="MF_01552"/>
    </source>
</evidence>
<proteinExistence type="inferred from homology"/>
<feature type="chain" id="PRO_1000194371" description="Ribosomal protein bS6--L-glutamate ligase">
    <location>
        <begin position="1"/>
        <end position="300"/>
    </location>
</feature>
<feature type="domain" description="ATP-grasp" evidence="1">
    <location>
        <begin position="104"/>
        <end position="287"/>
    </location>
</feature>
<feature type="binding site" evidence="1">
    <location>
        <position position="141"/>
    </location>
    <ligand>
        <name>ATP</name>
        <dbReference type="ChEBI" id="CHEBI:30616"/>
    </ligand>
</feature>
<feature type="binding site" evidence="1">
    <location>
        <begin position="178"/>
        <end position="179"/>
    </location>
    <ligand>
        <name>ATP</name>
        <dbReference type="ChEBI" id="CHEBI:30616"/>
    </ligand>
</feature>
<feature type="binding site" evidence="1">
    <location>
        <position position="187"/>
    </location>
    <ligand>
        <name>ATP</name>
        <dbReference type="ChEBI" id="CHEBI:30616"/>
    </ligand>
</feature>
<feature type="binding site" evidence="1">
    <location>
        <begin position="211"/>
        <end position="213"/>
    </location>
    <ligand>
        <name>ATP</name>
        <dbReference type="ChEBI" id="CHEBI:30616"/>
    </ligand>
</feature>
<feature type="binding site" evidence="1">
    <location>
        <position position="248"/>
    </location>
    <ligand>
        <name>Mg(2+)</name>
        <dbReference type="ChEBI" id="CHEBI:18420"/>
        <label>1</label>
    </ligand>
</feature>
<feature type="binding site" evidence="1">
    <location>
        <position position="248"/>
    </location>
    <ligand>
        <name>Mn(2+)</name>
        <dbReference type="ChEBI" id="CHEBI:29035"/>
        <label>1</label>
    </ligand>
</feature>
<feature type="binding site" evidence="1">
    <location>
        <position position="260"/>
    </location>
    <ligand>
        <name>Mg(2+)</name>
        <dbReference type="ChEBI" id="CHEBI:18420"/>
        <label>1</label>
    </ligand>
</feature>
<feature type="binding site" evidence="1">
    <location>
        <position position="260"/>
    </location>
    <ligand>
        <name>Mg(2+)</name>
        <dbReference type="ChEBI" id="CHEBI:18420"/>
        <label>2</label>
    </ligand>
</feature>
<feature type="binding site" evidence="1">
    <location>
        <position position="260"/>
    </location>
    <ligand>
        <name>Mn(2+)</name>
        <dbReference type="ChEBI" id="CHEBI:29035"/>
        <label>1</label>
    </ligand>
</feature>
<feature type="binding site" evidence="1">
    <location>
        <position position="260"/>
    </location>
    <ligand>
        <name>Mn(2+)</name>
        <dbReference type="ChEBI" id="CHEBI:29035"/>
        <label>2</label>
    </ligand>
</feature>
<feature type="binding site" evidence="1">
    <location>
        <position position="262"/>
    </location>
    <ligand>
        <name>Mg(2+)</name>
        <dbReference type="ChEBI" id="CHEBI:18420"/>
        <label>2</label>
    </ligand>
</feature>
<feature type="binding site" evidence="1">
    <location>
        <position position="262"/>
    </location>
    <ligand>
        <name>Mn(2+)</name>
        <dbReference type="ChEBI" id="CHEBI:29035"/>
        <label>2</label>
    </ligand>
</feature>